<reference key="1">
    <citation type="journal article" date="1997" name="Gene">
        <title>Molecular cloning and characterization of P113, a mouse SNF2/SWI2-related transcription factor.</title>
        <authorList>
            <person name="Zhang Q."/>
            <person name="Ekhterae D."/>
            <person name="Kim K.-H."/>
        </authorList>
    </citation>
    <scope>NUCLEOTIDE SEQUENCE [GENOMIC DNA / MRNA]</scope>
    <scope>SUBCELLULAR LOCATION</scope>
    <scope>FUNCTION</scope>
    <source>
        <tissue>Liver</tissue>
    </source>
</reference>
<reference key="2">
    <citation type="journal article" date="2004" name="Genome Res.">
        <title>The status, quality, and expansion of the NIH full-length cDNA project: the Mammalian Gene Collection (MGC).</title>
        <authorList>
            <consortium name="The MGC Project Team"/>
        </authorList>
    </citation>
    <scope>NUCLEOTIDE SEQUENCE [LARGE SCALE MRNA]</scope>
    <source>
        <strain>C57BL/6J</strain>
        <tissue>Brain</tissue>
        <tissue>Thymus</tissue>
    </source>
</reference>
<reference key="3">
    <citation type="journal article" date="1997" name="Dev. Biol.">
        <title>Developmental regulation of Zbu1, a DNA-binding member of the SWI2/SNF2 family.</title>
        <authorList>
            <person name="Gong X."/>
            <person name="Kaushal S."/>
            <person name="Ceccarelli E."/>
            <person name="Bogdanova N."/>
            <person name="Neville C."/>
            <person name="Nguyen T."/>
            <person name="Clark H."/>
            <person name="Khatib Z.A."/>
            <person name="Valentine M."/>
            <person name="Look A.T."/>
            <person name="Rosenthal N."/>
        </authorList>
    </citation>
    <scope>FUNCTION</scope>
    <scope>TISSUE SPECIFICITY</scope>
    <scope>DEVELOPMENTAL STAGE</scope>
</reference>
<reference key="4">
    <citation type="journal article" date="2011" name="Mol. Cell. Endocrinol.">
        <title>Prolactin induces Jak2 phosphorylation of RUSHY195.</title>
        <authorList>
            <person name="Helmer R.A."/>
            <person name="Dertien J.S."/>
            <person name="Chilton B.S."/>
        </authorList>
    </citation>
    <scope>PHOSPHORYLATION AT TYR-195</scope>
</reference>
<sequence length="1003" mass="113317">MSYTFTRGPVWKYSQSVQYGSHENIPRLSYSTFLPHFEFQDIIPPDDFLTSDEEQDLVLFGTMRGQVVGLRYYTGVVNNNEMVALQREPNNPYDKNAIKVNNVNGNQVGHIKREIAAAVAYIMDNKLAQVEGVVPFGASNTFTMPLYMTFWGKEENRNVVLEQLKKHGFKLGPTPKTLGSSLENAWGSGRAGPSYSRPAHVAVQMTTDQLKTEFDKLFEDLKEDDRTVEMEPAEAIETPLLPHQKQALAWMIARENSKELPPFWEQRNDLYYNTITNFSVKERPENVHGGILADDMGLGKTLTAIAVILTNFDDGRPLLSKRGKKNHPGKEYKDETIKRRGSNMDKKEDGHSESSTCGEEPSISGTPEKSSCTLSQLSSVCPKRRKISVQYIESSDSEEIETSELPQKMKGKLKNVQLNTKSRVKGSSKVKEDSKFALTFFASATQRKMLKKGMSMMECSEACDTGERTRATLIICPLSVLSNWIDQFGQHVKSEVHLNFYVYYGPDRIRDSAWLSKQDIILTTYNILTHDYGTKDDSPLHSIKWLRVILDEGHAIRNPNAQQTKAVLELEAERRWVLTGTPIQNSLKDLWSLLSFLKLKPFIDREWWYRIIQRPVTTGDEGGLRRLQSLIKNITLRRTKTSKIKGKPVLELPERKVFIQHITLSEEERKIYQSVKNEGKAAIGRYFTEGTVLAHYADVLGLLLRLRQICCHTHLLTNGMSSSGPSRSDTPEELRKMLIEKMKIILSSGSDEECAICLDSLTFPVITHCAHVFCKPCICQVIHSEQPHAKCPLCRNEIHGDNLLECPPEELACDSDKESSMEWKSSSKINALMHALIELRTKDPNIKSLVVSQFTTFLSLIETPLKASGFVFTRLDGSMAQKKRVESIQRFQNTEAGSPTIMLLSLKAGGVGLNLCAASRVFLMDPAWNPAAEDQCFDRCHRLGQKQEVIITKFIVKDSVEENMLKIQNTKRDLAAGAFGTKKTDANDMKQAKINEIRTLIDL</sequence>
<keyword id="KW-0010">Activator</keyword>
<keyword id="KW-0067">ATP-binding</keyword>
<keyword id="KW-0156">Chromatin regulator</keyword>
<keyword id="KW-0963">Cytoplasm</keyword>
<keyword id="KW-0238">DNA-binding</keyword>
<keyword id="KW-0347">Helicase</keyword>
<keyword id="KW-0378">Hydrolase</keyword>
<keyword id="KW-1017">Isopeptide bond</keyword>
<keyword id="KW-0479">Metal-binding</keyword>
<keyword id="KW-0488">Methylation</keyword>
<keyword id="KW-0511">Multifunctional enzyme</keyword>
<keyword id="KW-0547">Nucleotide-binding</keyword>
<keyword id="KW-0539">Nucleus</keyword>
<keyword id="KW-0597">Phosphoprotein</keyword>
<keyword id="KW-1185">Reference proteome</keyword>
<keyword id="KW-0804">Transcription</keyword>
<keyword id="KW-0808">Transferase</keyword>
<keyword id="KW-0832">Ubl conjugation</keyword>
<keyword id="KW-0833">Ubl conjugation pathway</keyword>
<keyword id="KW-0862">Zinc</keyword>
<keyword id="KW-0863">Zinc-finger</keyword>
<name>HLTF_MOUSE</name>
<accession>Q6PCN7</accession>
<accession>O35596</accession>
<accession>O35597</accession>
<accession>Q80VT6</accession>
<proteinExistence type="evidence at protein level"/>
<feature type="chain" id="PRO_0000056185" description="Helicase-like transcription factor">
    <location>
        <begin position="1"/>
        <end position="1003"/>
    </location>
</feature>
<feature type="domain" description="Helicase ATP-binding" evidence="4">
    <location>
        <begin position="433"/>
        <end position="600"/>
    </location>
</feature>
<feature type="domain" description="Helicase C-terminal" evidence="5">
    <location>
        <begin position="831"/>
        <end position="990"/>
    </location>
</feature>
<feature type="zinc finger region" description="RING-type" evidence="3">
    <location>
        <begin position="754"/>
        <end position="795"/>
    </location>
</feature>
<feature type="region of interest" description="DNA-binding" evidence="1">
    <location>
        <begin position="38"/>
        <end position="287"/>
    </location>
</feature>
<feature type="region of interest" description="Disordered" evidence="6">
    <location>
        <begin position="317"/>
        <end position="373"/>
    </location>
</feature>
<feature type="region of interest" description="Interaction with SP1 and SP3" evidence="1">
    <location>
        <begin position="919"/>
        <end position="1003"/>
    </location>
</feature>
<feature type="short sequence motif" description="DEGH box">
    <location>
        <begin position="551"/>
        <end position="554"/>
    </location>
</feature>
<feature type="compositionally biased region" description="Basic and acidic residues" evidence="6">
    <location>
        <begin position="328"/>
        <end position="352"/>
    </location>
</feature>
<feature type="compositionally biased region" description="Polar residues" evidence="6">
    <location>
        <begin position="353"/>
        <end position="373"/>
    </location>
</feature>
<feature type="binding site" evidence="4">
    <location>
        <begin position="294"/>
        <end position="301"/>
    </location>
    <ligand>
        <name>ATP</name>
        <dbReference type="ChEBI" id="CHEBI:30616"/>
    </ligand>
</feature>
<feature type="modified residue" description="Omega-N-methylarginine" evidence="2">
    <location>
        <position position="27"/>
    </location>
</feature>
<feature type="modified residue" description="Phosphotyrosine; by JAK2" evidence="7">
    <location>
        <position position="195"/>
    </location>
</feature>
<feature type="modified residue" description="Phosphoserine" evidence="2">
    <location>
        <position position="394"/>
    </location>
</feature>
<feature type="modified residue" description="Phosphoserine" evidence="2">
    <location>
        <position position="395"/>
    </location>
</feature>
<feature type="modified residue" description="Phosphoserine" evidence="2">
    <location>
        <position position="397"/>
    </location>
</feature>
<feature type="modified residue" description="Phosphothreonine" evidence="2">
    <location>
        <position position="730"/>
    </location>
</feature>
<feature type="cross-link" description="Glycyl lysine isopeptide (Lys-Gly) (interchain with G-Cter in SUMO2)" evidence="2">
    <location>
        <position position="112"/>
    </location>
</feature>
<feature type="cross-link" description="Glycyl lysine isopeptide (Lys-Gly) (interchain with G-Cter in SUMO2)" evidence="2">
    <location>
        <position position="211"/>
    </location>
</feature>
<feature type="sequence conflict" description="In Ref. 1; AAB64175/AAB63915." evidence="10" ref="1">
    <original>F</original>
    <variation>Y</variation>
    <location>
        <position position="150"/>
    </location>
</feature>
<feature type="sequence conflict" description="In Ref. 1; AAB64175/AAB63915." evidence="10" ref="1">
    <original>A</original>
    <variation>R</variation>
    <location>
        <position position="191"/>
    </location>
</feature>
<feature type="sequence conflict" description="In Ref. 1; AAB64175/AAB63915." evidence="10" ref="1">
    <original>S</original>
    <variation>N</variation>
    <location>
        <position position="394"/>
    </location>
</feature>
<feature type="sequence conflict" description="In Ref. 1; AAB64175/AAB63915." evidence="10" ref="1">
    <original>P</original>
    <variation>S</variation>
    <location>
        <position position="648"/>
    </location>
</feature>
<feature type="sequence conflict" description="In Ref. 1; AAB64175." evidence="10" ref="1">
    <original>MLLS</original>
    <variation>STV</variation>
    <location>
        <begin position="902"/>
        <end position="905"/>
    </location>
</feature>
<feature type="sequence conflict" description="In Ref. 1; AAB64175." evidence="10" ref="1">
    <original>A</original>
    <variation>R</variation>
    <location>
        <position position="918"/>
    </location>
</feature>
<feature type="sequence conflict" description="In Ref. 1; AAB64175." evidence="10" ref="1">
    <original>G</original>
    <variation>A</variation>
    <location>
        <position position="980"/>
    </location>
</feature>
<organism>
    <name type="scientific">Mus musculus</name>
    <name type="common">Mouse</name>
    <dbReference type="NCBI Taxonomy" id="10090"/>
    <lineage>
        <taxon>Eukaryota</taxon>
        <taxon>Metazoa</taxon>
        <taxon>Chordata</taxon>
        <taxon>Craniata</taxon>
        <taxon>Vertebrata</taxon>
        <taxon>Euteleostomi</taxon>
        <taxon>Mammalia</taxon>
        <taxon>Eutheria</taxon>
        <taxon>Euarchontoglires</taxon>
        <taxon>Glires</taxon>
        <taxon>Rodentia</taxon>
        <taxon>Myomorpha</taxon>
        <taxon>Muroidea</taxon>
        <taxon>Muridae</taxon>
        <taxon>Murinae</taxon>
        <taxon>Mus</taxon>
        <taxon>Mus</taxon>
    </lineage>
</organism>
<gene>
    <name type="primary">Hltf</name>
    <name type="synonym">Smarca3</name>
    <name type="synonym">Snf2l3</name>
    <name type="synonym">Zbu1</name>
</gene>
<protein>
    <recommendedName>
        <fullName>Helicase-like transcription factor</fullName>
        <ecNumber>2.3.2.27</ecNumber>
        <ecNumber>3.6.4.-</ecNumber>
    </recommendedName>
    <alternativeName>
        <fullName>P113</fullName>
    </alternativeName>
    <alternativeName>
        <fullName evidence="10">RING-type E3 ubiquitin transferase HLTF</fullName>
    </alternativeName>
    <alternativeName>
        <fullName>SWI/SNF-related matrix-associated actin-dependent regulator of chromatin subfamily A member 3</fullName>
    </alternativeName>
    <alternativeName>
        <fullName>Sucrose nonfermenting protein 2-like 3</fullName>
    </alternativeName>
    <alternativeName>
        <fullName>TNF-response element-binding protein</fullName>
    </alternativeName>
</protein>
<evidence type="ECO:0000250" key="1"/>
<evidence type="ECO:0000250" key="2">
    <source>
        <dbReference type="UniProtKB" id="Q14527"/>
    </source>
</evidence>
<evidence type="ECO:0000255" key="3">
    <source>
        <dbReference type="PROSITE-ProRule" id="PRU00175"/>
    </source>
</evidence>
<evidence type="ECO:0000255" key="4">
    <source>
        <dbReference type="PROSITE-ProRule" id="PRU00541"/>
    </source>
</evidence>
<evidence type="ECO:0000255" key="5">
    <source>
        <dbReference type="PROSITE-ProRule" id="PRU00542"/>
    </source>
</evidence>
<evidence type="ECO:0000256" key="6">
    <source>
        <dbReference type="SAM" id="MobiDB-lite"/>
    </source>
</evidence>
<evidence type="ECO:0000269" key="7">
    <source>
    </source>
</evidence>
<evidence type="ECO:0000269" key="8">
    <source>
    </source>
</evidence>
<evidence type="ECO:0000269" key="9">
    <source>
    </source>
</evidence>
<evidence type="ECO:0000305" key="10"/>
<dbReference type="EC" id="2.3.2.27"/>
<dbReference type="EC" id="3.6.4.-"/>
<dbReference type="EMBL" id="AF010138">
    <property type="protein sequence ID" value="AAB64175.1"/>
    <property type="molecule type" value="Genomic_DNA"/>
</dbReference>
<dbReference type="EMBL" id="AF010600">
    <property type="protein sequence ID" value="AAB63915.1"/>
    <property type="status" value="ALT_SEQ"/>
    <property type="molecule type" value="mRNA"/>
</dbReference>
<dbReference type="EMBL" id="BC039796">
    <property type="protein sequence ID" value="AAH39796.1"/>
    <property type="molecule type" value="mRNA"/>
</dbReference>
<dbReference type="EMBL" id="BC057116">
    <property type="protein sequence ID" value="AAH57116.1"/>
    <property type="molecule type" value="mRNA"/>
</dbReference>
<dbReference type="EMBL" id="BC059240">
    <property type="protein sequence ID" value="AAH59240.1"/>
    <property type="molecule type" value="mRNA"/>
</dbReference>
<dbReference type="CCDS" id="CCDS17261.1"/>
<dbReference type="RefSeq" id="NP_001342026.1">
    <property type="nucleotide sequence ID" value="NM_001355097.1"/>
</dbReference>
<dbReference type="RefSeq" id="NP_033236.2">
    <property type="nucleotide sequence ID" value="NM_009210.3"/>
</dbReference>
<dbReference type="RefSeq" id="XP_006535491.1">
    <property type="nucleotide sequence ID" value="XM_006535428.3"/>
</dbReference>
<dbReference type="SMR" id="Q6PCN7"/>
<dbReference type="BioGRID" id="203335">
    <property type="interactions" value="7"/>
</dbReference>
<dbReference type="ComplexPortal" id="CPX-899">
    <property type="entry name" value="SMARCA3 - Annexin A2 - S100-A10 complex"/>
</dbReference>
<dbReference type="FunCoup" id="Q6PCN7">
    <property type="interactions" value="2831"/>
</dbReference>
<dbReference type="IntAct" id="Q6PCN7">
    <property type="interactions" value="3"/>
</dbReference>
<dbReference type="STRING" id="10090.ENSMUSP00000002502"/>
<dbReference type="GlyGen" id="Q6PCN7">
    <property type="glycosylation" value="1 site"/>
</dbReference>
<dbReference type="iPTMnet" id="Q6PCN7"/>
<dbReference type="PhosphoSitePlus" id="Q6PCN7"/>
<dbReference type="jPOST" id="Q6PCN7"/>
<dbReference type="PaxDb" id="10090-ENSMUSP00000002502"/>
<dbReference type="PeptideAtlas" id="Q6PCN7"/>
<dbReference type="ProteomicsDB" id="273363"/>
<dbReference type="Pumba" id="Q6PCN7"/>
<dbReference type="Antibodypedia" id="18197">
    <property type="antibodies" value="316 antibodies from 32 providers"/>
</dbReference>
<dbReference type="DNASU" id="20585"/>
<dbReference type="Ensembl" id="ENSMUST00000002502.12">
    <property type="protein sequence ID" value="ENSMUSP00000002502.6"/>
    <property type="gene ID" value="ENSMUSG00000002428.13"/>
</dbReference>
<dbReference type="GeneID" id="20585"/>
<dbReference type="KEGG" id="mmu:20585"/>
<dbReference type="UCSC" id="uc008osk.1">
    <property type="organism name" value="mouse"/>
</dbReference>
<dbReference type="AGR" id="MGI:1196437"/>
<dbReference type="CTD" id="6596"/>
<dbReference type="MGI" id="MGI:1196437">
    <property type="gene designation" value="Hltf"/>
</dbReference>
<dbReference type="VEuPathDB" id="HostDB:ENSMUSG00000002428"/>
<dbReference type="eggNOG" id="KOG1001">
    <property type="taxonomic scope" value="Eukaryota"/>
</dbReference>
<dbReference type="GeneTree" id="ENSGT00910000144305"/>
<dbReference type="HOGENOM" id="CLU_000315_2_5_1"/>
<dbReference type="InParanoid" id="Q6PCN7"/>
<dbReference type="OMA" id="ETTVWRL"/>
<dbReference type="OrthoDB" id="276744at2759"/>
<dbReference type="PhylomeDB" id="Q6PCN7"/>
<dbReference type="TreeFam" id="TF332703"/>
<dbReference type="Reactome" id="R-MMU-8866654">
    <property type="pathway name" value="E3 ubiquitin ligases ubiquitinate target proteins"/>
</dbReference>
<dbReference type="UniPathway" id="UPA00143"/>
<dbReference type="BioGRID-ORCS" id="20585">
    <property type="hits" value="3 hits in 120 CRISPR screens"/>
</dbReference>
<dbReference type="ChiTaRS" id="Hltf">
    <property type="organism name" value="mouse"/>
</dbReference>
<dbReference type="PRO" id="PR:Q6PCN7"/>
<dbReference type="Proteomes" id="UP000000589">
    <property type="component" value="Chromosome 3"/>
</dbReference>
<dbReference type="RNAct" id="Q6PCN7">
    <property type="molecule type" value="protein"/>
</dbReference>
<dbReference type="Bgee" id="ENSMUSG00000002428">
    <property type="expression patterns" value="Expressed in saccule of membranous labyrinth and 262 other cell types or tissues"/>
</dbReference>
<dbReference type="ExpressionAtlas" id="Q6PCN7">
    <property type="expression patterns" value="baseline and differential"/>
</dbReference>
<dbReference type="GO" id="GO:0005737">
    <property type="term" value="C:cytoplasm"/>
    <property type="evidence" value="ECO:0007669"/>
    <property type="project" value="UniProtKB-SubCell"/>
</dbReference>
<dbReference type="GO" id="GO:0016363">
    <property type="term" value="C:nuclear matrix"/>
    <property type="evidence" value="ECO:0000303"/>
    <property type="project" value="ComplexPortal"/>
</dbReference>
<dbReference type="GO" id="GO:0005730">
    <property type="term" value="C:nucleolus"/>
    <property type="evidence" value="ECO:0007669"/>
    <property type="project" value="UniProtKB-SubCell"/>
</dbReference>
<dbReference type="GO" id="GO:0005654">
    <property type="term" value="C:nucleoplasm"/>
    <property type="evidence" value="ECO:0007669"/>
    <property type="project" value="UniProtKB-SubCell"/>
</dbReference>
<dbReference type="GO" id="GO:0090575">
    <property type="term" value="C:RNA polymerase II transcription regulator complex"/>
    <property type="evidence" value="ECO:0000353"/>
    <property type="project" value="ComplexPortal"/>
</dbReference>
<dbReference type="GO" id="GO:0005524">
    <property type="term" value="F:ATP binding"/>
    <property type="evidence" value="ECO:0007669"/>
    <property type="project" value="UniProtKB-KW"/>
</dbReference>
<dbReference type="GO" id="GO:0008094">
    <property type="term" value="F:ATP-dependent activity, acting on DNA"/>
    <property type="evidence" value="ECO:0000314"/>
    <property type="project" value="MGI"/>
</dbReference>
<dbReference type="GO" id="GO:0003677">
    <property type="term" value="F:DNA binding"/>
    <property type="evidence" value="ECO:0007669"/>
    <property type="project" value="UniProtKB-KW"/>
</dbReference>
<dbReference type="GO" id="GO:0004386">
    <property type="term" value="F:helicase activity"/>
    <property type="evidence" value="ECO:0007669"/>
    <property type="project" value="UniProtKB-KW"/>
</dbReference>
<dbReference type="GO" id="GO:0016818">
    <property type="term" value="F:hydrolase activity, acting on acid anhydrides, in phosphorus-containing anhydrides"/>
    <property type="evidence" value="ECO:0007669"/>
    <property type="project" value="InterPro"/>
</dbReference>
<dbReference type="GO" id="GO:0016740">
    <property type="term" value="F:transferase activity"/>
    <property type="evidence" value="ECO:0007669"/>
    <property type="project" value="UniProtKB-KW"/>
</dbReference>
<dbReference type="GO" id="GO:0031625">
    <property type="term" value="F:ubiquitin protein ligase binding"/>
    <property type="evidence" value="ECO:0000266"/>
    <property type="project" value="MGI"/>
</dbReference>
<dbReference type="GO" id="GO:0008270">
    <property type="term" value="F:zinc ion binding"/>
    <property type="evidence" value="ECO:0007669"/>
    <property type="project" value="UniProtKB-KW"/>
</dbReference>
<dbReference type="GO" id="GO:0006325">
    <property type="term" value="P:chromatin organization"/>
    <property type="evidence" value="ECO:0007669"/>
    <property type="project" value="UniProtKB-KW"/>
</dbReference>
<dbReference type="GO" id="GO:0042789">
    <property type="term" value="P:mRNA transcription by RNA polymerase II"/>
    <property type="evidence" value="ECO:0000314"/>
    <property type="project" value="ComplexPortal"/>
</dbReference>
<dbReference type="GO" id="GO:0045944">
    <property type="term" value="P:positive regulation of transcription by RNA polymerase II"/>
    <property type="evidence" value="ECO:0000314"/>
    <property type="project" value="NTNU_SB"/>
</dbReference>
<dbReference type="GO" id="GO:0016567">
    <property type="term" value="P:protein ubiquitination"/>
    <property type="evidence" value="ECO:0007669"/>
    <property type="project" value="UniProtKB-UniPathway"/>
</dbReference>
<dbReference type="GO" id="GO:0050767">
    <property type="term" value="P:regulation of neurogenesis"/>
    <property type="evidence" value="ECO:0000314"/>
    <property type="project" value="ComplexPortal"/>
</dbReference>
<dbReference type="CDD" id="cd18071">
    <property type="entry name" value="DEXHc_HLTF1_SMARC3"/>
    <property type="match status" value="1"/>
</dbReference>
<dbReference type="CDD" id="cd16509">
    <property type="entry name" value="RING-HC_HLTF"/>
    <property type="match status" value="1"/>
</dbReference>
<dbReference type="CDD" id="cd18793">
    <property type="entry name" value="SF2_C_SNF"/>
    <property type="match status" value="1"/>
</dbReference>
<dbReference type="FunFam" id="3.40.50.10810:FF:000023">
    <property type="entry name" value="helicase-like transcription factor isoform X1"/>
    <property type="match status" value="1"/>
</dbReference>
<dbReference type="Gene3D" id="3.30.70.2330">
    <property type="match status" value="1"/>
</dbReference>
<dbReference type="Gene3D" id="3.40.50.300">
    <property type="entry name" value="P-loop containing nucleotide triphosphate hydrolases"/>
    <property type="match status" value="1"/>
</dbReference>
<dbReference type="Gene3D" id="3.40.50.10810">
    <property type="entry name" value="Tandem AAA-ATPase domain"/>
    <property type="match status" value="2"/>
</dbReference>
<dbReference type="Gene3D" id="3.30.40.10">
    <property type="entry name" value="Zinc/RING finger domain, C3HC4 (zinc finger)"/>
    <property type="match status" value="1"/>
</dbReference>
<dbReference type="InterPro" id="IPR014001">
    <property type="entry name" value="Helicase_ATP-bd"/>
</dbReference>
<dbReference type="InterPro" id="IPR001650">
    <property type="entry name" value="Helicase_C-like"/>
</dbReference>
<dbReference type="InterPro" id="IPR014905">
    <property type="entry name" value="HIRAN"/>
</dbReference>
<dbReference type="InterPro" id="IPR027417">
    <property type="entry name" value="P-loop_NTPase"/>
</dbReference>
<dbReference type="InterPro" id="IPR038718">
    <property type="entry name" value="SNF2-like_sf"/>
</dbReference>
<dbReference type="InterPro" id="IPR049730">
    <property type="entry name" value="SNF2/RAD54-like_C"/>
</dbReference>
<dbReference type="InterPro" id="IPR000330">
    <property type="entry name" value="SNF2_N"/>
</dbReference>
<dbReference type="InterPro" id="IPR050628">
    <property type="entry name" value="SNF2_RAD54_helicase_TF"/>
</dbReference>
<dbReference type="InterPro" id="IPR001841">
    <property type="entry name" value="Znf_RING"/>
</dbReference>
<dbReference type="InterPro" id="IPR013083">
    <property type="entry name" value="Znf_RING/FYVE/PHD"/>
</dbReference>
<dbReference type="InterPro" id="IPR017907">
    <property type="entry name" value="Znf_RING_CS"/>
</dbReference>
<dbReference type="PANTHER" id="PTHR45626:SF17">
    <property type="entry name" value="HELICASE-LIKE TRANSCRIPTION FACTOR"/>
    <property type="match status" value="1"/>
</dbReference>
<dbReference type="PANTHER" id="PTHR45626">
    <property type="entry name" value="TRANSCRIPTION TERMINATION FACTOR 2-RELATED"/>
    <property type="match status" value="1"/>
</dbReference>
<dbReference type="Pfam" id="PF00271">
    <property type="entry name" value="Helicase_C"/>
    <property type="match status" value="1"/>
</dbReference>
<dbReference type="Pfam" id="PF08797">
    <property type="entry name" value="HIRAN"/>
    <property type="match status" value="1"/>
</dbReference>
<dbReference type="Pfam" id="PF00176">
    <property type="entry name" value="SNF2-rel_dom"/>
    <property type="match status" value="1"/>
</dbReference>
<dbReference type="Pfam" id="PF13923">
    <property type="entry name" value="zf-C3HC4_2"/>
    <property type="match status" value="1"/>
</dbReference>
<dbReference type="SMART" id="SM00487">
    <property type="entry name" value="DEXDc"/>
    <property type="match status" value="1"/>
</dbReference>
<dbReference type="SMART" id="SM00490">
    <property type="entry name" value="HELICc"/>
    <property type="match status" value="1"/>
</dbReference>
<dbReference type="SMART" id="SM00910">
    <property type="entry name" value="HIRAN"/>
    <property type="match status" value="1"/>
</dbReference>
<dbReference type="SMART" id="SM00184">
    <property type="entry name" value="RING"/>
    <property type="match status" value="1"/>
</dbReference>
<dbReference type="SUPFAM" id="SSF52540">
    <property type="entry name" value="P-loop containing nucleoside triphosphate hydrolases"/>
    <property type="match status" value="2"/>
</dbReference>
<dbReference type="SUPFAM" id="SSF57850">
    <property type="entry name" value="RING/U-box"/>
    <property type="match status" value="1"/>
</dbReference>
<dbReference type="PROSITE" id="PS51192">
    <property type="entry name" value="HELICASE_ATP_BIND_1"/>
    <property type="match status" value="1"/>
</dbReference>
<dbReference type="PROSITE" id="PS51194">
    <property type="entry name" value="HELICASE_CTER"/>
    <property type="match status" value="1"/>
</dbReference>
<dbReference type="PROSITE" id="PS00518">
    <property type="entry name" value="ZF_RING_1"/>
    <property type="match status" value="1"/>
</dbReference>
<dbReference type="PROSITE" id="PS50089">
    <property type="entry name" value="ZF_RING_2"/>
    <property type="match status" value="1"/>
</dbReference>
<comment type="function">
    <text evidence="1 8 9">Has both helicase and E3 ubiquitin ligase activities. Possesses intrinsic ATP-dependent nucleosome-remodeling activity. This activity may be required for transcriptional activation or repression of specific target promoters (By similarity). These may include the SERPINE1, to which this protein can bind directly. Plays a role in error-free postreplication repair (PRR) of damaged DNA and maintains genomic stability through acting as a ubiquitin ligase for 'Lys-63'-linked polyubiquitination of chromatin-bound PCNA (By similarity).</text>
</comment>
<comment type="catalytic activity">
    <reaction>
        <text>S-ubiquitinyl-[E2 ubiquitin-conjugating enzyme]-L-cysteine + [acceptor protein]-L-lysine = [E2 ubiquitin-conjugating enzyme]-L-cysteine + N(6)-ubiquitinyl-[acceptor protein]-L-lysine.</text>
        <dbReference type="EC" id="2.3.2.27"/>
    </reaction>
</comment>
<comment type="pathway">
    <text>Protein modification; protein ubiquitination.</text>
</comment>
<comment type="subunit">
    <text evidence="1">Interacts with SP1 and SP3 independently of DNA; the interaction with these transcriptional factors may be required for basal transcription of target genes. Interacts with EGR1; the interaction requires prior binding to DNA and represses c-Rel via a DNA looping mechanism. Interacts with GATA4. Interacts with PCNA; the interaction promotes polyubiquitination of PCNA through association with the UBE2B-RAD18 and UBE2V2-UBE2N ubiquitin ligase complexes. Interacts with RAD18, SHPRH, UBE2V2 and UBE2N (By similarity).</text>
</comment>
<comment type="subcellular location">
    <subcellularLocation>
        <location evidence="1">Cytoplasm</location>
    </subcellularLocation>
    <subcellularLocation>
        <location evidence="9">Nucleus</location>
    </subcellularLocation>
    <subcellularLocation>
        <location evidence="1">Nucleus</location>
        <location evidence="1">Nucleolus</location>
    </subcellularLocation>
    <subcellularLocation>
        <location evidence="1">Nucleus</location>
        <location evidence="1">Nucleoplasm</location>
    </subcellularLocation>
    <text evidence="1">Nuclear localization is stimulated by progesterone.</text>
</comment>
<comment type="tissue specificity">
    <text evidence="8">Expressed in brain, heart, kidney, liver, lung, pancreas, placenta and skeletal muscle.</text>
</comment>
<comment type="developmental stage">
    <text evidence="8">Expressed in the heart from 11.5 dpc. Gradually increases in skeletal muscle to 18.5 dpc.</text>
</comment>
<comment type="similarity">
    <text evidence="10">Belongs to the SNF2/RAD54 helicase family. RAD16 subfamily.</text>
</comment>
<comment type="sequence caution" evidence="10">
    <conflict type="miscellaneous discrepancy">
        <sequence resource="EMBL-CDS" id="AAB63915"/>
    </conflict>
    <text>Intron retention.</text>
</comment>